<sequence length="158" mass="17666">MTSLVVPGLDTLRQWLDDLGMSFFECDNCQALHLPHMQNFDGVFDAKIDLIDNTILFSAMAEVRPSAVLPLAADLSAINASSLTVKAFLDMQDDNLPKLVVCQSLSVMQGVTYEQFAWFVRQSEEQISMVILEANAHQLLLPTDDEGQNNVTENYFLH</sequence>
<keyword id="KW-1185">Reference proteome</keyword>
<comment type="interaction">
    <interactant intactId="EBI-9138440">
        <id>P0AAY6</id>
    </interactant>
    <interactant intactId="EBI-9134503">
        <id>Q46953</id>
        <label>ypjF</label>
    </interactant>
    <organismsDiffer>false</organismsDiffer>
    <experiments>3</experiments>
</comment>
<gene>
    <name type="primary">ybjN</name>
    <name type="ordered locus">b0853</name>
    <name type="ordered locus">JW0837</name>
</gene>
<name>YBJN_ECOLI</name>
<feature type="chain" id="PRO_0000168743" description="Uncharacterized protein YbjN">
    <location>
        <begin position="1"/>
        <end position="158"/>
    </location>
</feature>
<accession>P0AAY6</accession>
<accession>P75815</accession>
<protein>
    <recommendedName>
        <fullName>Uncharacterized protein YbjN</fullName>
    </recommendedName>
</protein>
<proteinExistence type="evidence at protein level"/>
<organism>
    <name type="scientific">Escherichia coli (strain K12)</name>
    <dbReference type="NCBI Taxonomy" id="83333"/>
    <lineage>
        <taxon>Bacteria</taxon>
        <taxon>Pseudomonadati</taxon>
        <taxon>Pseudomonadota</taxon>
        <taxon>Gammaproteobacteria</taxon>
        <taxon>Enterobacterales</taxon>
        <taxon>Enterobacteriaceae</taxon>
        <taxon>Escherichia</taxon>
    </lineage>
</organism>
<reference key="1">
    <citation type="journal article" date="1996" name="DNA Res.">
        <title>A 718-kb DNA sequence of the Escherichia coli K-12 genome corresponding to the 12.7-28.0 min region on the linkage map.</title>
        <authorList>
            <person name="Oshima T."/>
            <person name="Aiba H."/>
            <person name="Baba T."/>
            <person name="Fujita K."/>
            <person name="Hayashi K."/>
            <person name="Honjo A."/>
            <person name="Ikemoto K."/>
            <person name="Inada T."/>
            <person name="Itoh T."/>
            <person name="Kajihara M."/>
            <person name="Kanai K."/>
            <person name="Kashimoto K."/>
            <person name="Kimura S."/>
            <person name="Kitagawa M."/>
            <person name="Makino K."/>
            <person name="Masuda S."/>
            <person name="Miki T."/>
            <person name="Mizobuchi K."/>
            <person name="Mori H."/>
            <person name="Motomura K."/>
            <person name="Nakamura Y."/>
            <person name="Nashimoto H."/>
            <person name="Nishio Y."/>
            <person name="Saito N."/>
            <person name="Sampei G."/>
            <person name="Seki Y."/>
            <person name="Tagami H."/>
            <person name="Takemoto K."/>
            <person name="Wada C."/>
            <person name="Yamamoto Y."/>
            <person name="Yano M."/>
            <person name="Horiuchi T."/>
        </authorList>
    </citation>
    <scope>NUCLEOTIDE SEQUENCE [LARGE SCALE GENOMIC DNA]</scope>
    <source>
        <strain>K12 / W3110 / ATCC 27325 / DSM 5911</strain>
    </source>
</reference>
<reference key="2">
    <citation type="journal article" date="1997" name="Science">
        <title>The complete genome sequence of Escherichia coli K-12.</title>
        <authorList>
            <person name="Blattner F.R."/>
            <person name="Plunkett G. III"/>
            <person name="Bloch C.A."/>
            <person name="Perna N.T."/>
            <person name="Burland V."/>
            <person name="Riley M."/>
            <person name="Collado-Vides J."/>
            <person name="Glasner J.D."/>
            <person name="Rode C.K."/>
            <person name="Mayhew G.F."/>
            <person name="Gregor J."/>
            <person name="Davis N.W."/>
            <person name="Kirkpatrick H.A."/>
            <person name="Goeden M.A."/>
            <person name="Rose D.J."/>
            <person name="Mau B."/>
            <person name="Shao Y."/>
        </authorList>
    </citation>
    <scope>NUCLEOTIDE SEQUENCE [LARGE SCALE GENOMIC DNA]</scope>
    <source>
        <strain>K12 / MG1655 / ATCC 47076</strain>
    </source>
</reference>
<reference key="3">
    <citation type="journal article" date="2006" name="Mol. Syst. Biol.">
        <title>Highly accurate genome sequences of Escherichia coli K-12 strains MG1655 and W3110.</title>
        <authorList>
            <person name="Hayashi K."/>
            <person name="Morooka N."/>
            <person name="Yamamoto Y."/>
            <person name="Fujita K."/>
            <person name="Isono K."/>
            <person name="Choi S."/>
            <person name="Ohtsubo E."/>
            <person name="Baba T."/>
            <person name="Wanner B.L."/>
            <person name="Mori H."/>
            <person name="Horiuchi T."/>
        </authorList>
    </citation>
    <scope>NUCLEOTIDE SEQUENCE [LARGE SCALE GENOMIC DNA]</scope>
    <source>
        <strain>K12 / W3110 / ATCC 27325 / DSM 5911</strain>
    </source>
</reference>
<dbReference type="EMBL" id="U00096">
    <property type="protein sequence ID" value="AAC73940.1"/>
    <property type="molecule type" value="Genomic_DNA"/>
</dbReference>
<dbReference type="EMBL" id="AP009048">
    <property type="protein sequence ID" value="BAA35564.1"/>
    <property type="molecule type" value="Genomic_DNA"/>
</dbReference>
<dbReference type="PIR" id="E64823">
    <property type="entry name" value="E64823"/>
</dbReference>
<dbReference type="RefSeq" id="NP_415374.1">
    <property type="nucleotide sequence ID" value="NC_000913.3"/>
</dbReference>
<dbReference type="RefSeq" id="WP_000203025.1">
    <property type="nucleotide sequence ID" value="NZ_STEB01000019.1"/>
</dbReference>
<dbReference type="SMR" id="P0AAY6"/>
<dbReference type="BioGRID" id="4259993">
    <property type="interactions" value="9"/>
</dbReference>
<dbReference type="BioGRID" id="849856">
    <property type="interactions" value="5"/>
</dbReference>
<dbReference type="FunCoup" id="P0AAY6">
    <property type="interactions" value="81"/>
</dbReference>
<dbReference type="IntAct" id="P0AAY6">
    <property type="interactions" value="7"/>
</dbReference>
<dbReference type="STRING" id="511145.b0853"/>
<dbReference type="jPOST" id="P0AAY6"/>
<dbReference type="PaxDb" id="511145-b0853"/>
<dbReference type="DNASU" id="945482"/>
<dbReference type="EnsemblBacteria" id="AAC73940">
    <property type="protein sequence ID" value="AAC73940"/>
    <property type="gene ID" value="b0853"/>
</dbReference>
<dbReference type="GeneID" id="945482"/>
<dbReference type="KEGG" id="ecj:JW0837"/>
<dbReference type="KEGG" id="eco:b0853"/>
<dbReference type="KEGG" id="ecoc:C3026_05320"/>
<dbReference type="PATRIC" id="fig|1411691.4.peg.1425"/>
<dbReference type="EchoBASE" id="EB3447"/>
<dbReference type="eggNOG" id="ENOG502ZC96">
    <property type="taxonomic scope" value="Bacteria"/>
</dbReference>
<dbReference type="HOGENOM" id="CLU_115861_0_0_6"/>
<dbReference type="InParanoid" id="P0AAY6"/>
<dbReference type="OMA" id="HMQNIDG"/>
<dbReference type="OrthoDB" id="6398515at2"/>
<dbReference type="PhylomeDB" id="P0AAY6"/>
<dbReference type="BioCyc" id="EcoCyc:G6447-MONOMER"/>
<dbReference type="PRO" id="PR:P0AAY6"/>
<dbReference type="Proteomes" id="UP000000625">
    <property type="component" value="Chromosome"/>
</dbReference>
<dbReference type="GO" id="GO:1902209">
    <property type="term" value="P:negative regulation of bacterial-type flagellum assembly"/>
    <property type="evidence" value="ECO:0000315"/>
    <property type="project" value="CACAO"/>
</dbReference>
<dbReference type="GO" id="GO:1902201">
    <property type="term" value="P:negative regulation of bacterial-type flagellum-dependent cell motility"/>
    <property type="evidence" value="ECO:0000315"/>
    <property type="project" value="EcoCyc"/>
</dbReference>
<dbReference type="GO" id="GO:0030308">
    <property type="term" value="P:negative regulation of cell growth"/>
    <property type="evidence" value="ECO:0000315"/>
    <property type="project" value="CACAO"/>
</dbReference>
<dbReference type="GO" id="GO:1900232">
    <property type="term" value="P:negative regulation of single-species biofilm formation on inanimate substrate"/>
    <property type="evidence" value="ECO:0000315"/>
    <property type="project" value="CACAO"/>
</dbReference>
<dbReference type="GO" id="GO:0009297">
    <property type="term" value="P:pilus assembly"/>
    <property type="evidence" value="ECO:0000315"/>
    <property type="project" value="CACAO"/>
</dbReference>
<dbReference type="GO" id="GO:0010212">
    <property type="term" value="P:response to ionizing radiation"/>
    <property type="evidence" value="ECO:0000315"/>
    <property type="project" value="EcoCyc"/>
</dbReference>
<dbReference type="CDD" id="cd17511">
    <property type="entry name" value="YbjN_AmyR-like"/>
    <property type="match status" value="1"/>
</dbReference>
<dbReference type="InterPro" id="IPR019660">
    <property type="entry name" value="Put_sensory_transdc_reg_YbjN"/>
</dbReference>
<dbReference type="Pfam" id="PF10722">
    <property type="entry name" value="YbjN"/>
    <property type="match status" value="1"/>
</dbReference>